<evidence type="ECO:0000255" key="1">
    <source>
        <dbReference type="HAMAP-Rule" id="MF_02076"/>
    </source>
</evidence>
<feature type="chain" id="PRO_0000367802" description="Glutamate--tRNA ligase">
    <location>
        <begin position="1"/>
        <end position="569"/>
    </location>
</feature>
<feature type="short sequence motif" description="'HIGH' region" evidence="1">
    <location>
        <begin position="99"/>
        <end position="109"/>
    </location>
</feature>
<dbReference type="EC" id="6.1.1.17" evidence="1"/>
<dbReference type="EMBL" id="CP000968">
    <property type="protein sequence ID" value="ACB07821.1"/>
    <property type="molecule type" value="Genomic_DNA"/>
</dbReference>
<dbReference type="RefSeq" id="WP_012309718.1">
    <property type="nucleotide sequence ID" value="NC_010482.1"/>
</dbReference>
<dbReference type="SMR" id="B1L5U2"/>
<dbReference type="FunCoup" id="B1L5U2">
    <property type="interactions" value="266"/>
</dbReference>
<dbReference type="STRING" id="374847.Kcr_1075"/>
<dbReference type="EnsemblBacteria" id="ACB07821">
    <property type="protein sequence ID" value="ACB07821"/>
    <property type="gene ID" value="Kcr_1075"/>
</dbReference>
<dbReference type="GeneID" id="6094352"/>
<dbReference type="KEGG" id="kcr:Kcr_1075"/>
<dbReference type="eggNOG" id="arCOG04302">
    <property type="taxonomic scope" value="Archaea"/>
</dbReference>
<dbReference type="HOGENOM" id="CLU_001882_2_3_2"/>
<dbReference type="InParanoid" id="B1L5U2"/>
<dbReference type="OrthoDB" id="10470at2157"/>
<dbReference type="PhylomeDB" id="B1L5U2"/>
<dbReference type="Proteomes" id="UP000001686">
    <property type="component" value="Chromosome"/>
</dbReference>
<dbReference type="GO" id="GO:0005829">
    <property type="term" value="C:cytosol"/>
    <property type="evidence" value="ECO:0000318"/>
    <property type="project" value="GO_Central"/>
</dbReference>
<dbReference type="GO" id="GO:0032991">
    <property type="term" value="C:protein-containing complex"/>
    <property type="evidence" value="ECO:0007669"/>
    <property type="project" value="UniProtKB-ARBA"/>
</dbReference>
<dbReference type="GO" id="GO:0005524">
    <property type="term" value="F:ATP binding"/>
    <property type="evidence" value="ECO:0007669"/>
    <property type="project" value="UniProtKB-UniRule"/>
</dbReference>
<dbReference type="GO" id="GO:0004818">
    <property type="term" value="F:glutamate-tRNA ligase activity"/>
    <property type="evidence" value="ECO:0007669"/>
    <property type="project" value="UniProtKB-UniRule"/>
</dbReference>
<dbReference type="GO" id="GO:0006424">
    <property type="term" value="P:glutamyl-tRNA aminoacylation"/>
    <property type="evidence" value="ECO:0007669"/>
    <property type="project" value="UniProtKB-UniRule"/>
</dbReference>
<dbReference type="FunFam" id="2.40.240.100:FF:000001">
    <property type="entry name" value="Glutamate--tRNA ligase"/>
    <property type="match status" value="1"/>
</dbReference>
<dbReference type="Gene3D" id="2.40.240.100">
    <property type="match status" value="1"/>
</dbReference>
<dbReference type="Gene3D" id="3.40.50.620">
    <property type="entry name" value="HUPs"/>
    <property type="match status" value="1"/>
</dbReference>
<dbReference type="Gene3D" id="2.40.240.10">
    <property type="entry name" value="Ribosomal Protein L25, Chain P"/>
    <property type="match status" value="1"/>
</dbReference>
<dbReference type="HAMAP" id="MF_02076">
    <property type="entry name" value="Glu_tRNA_synth_type2"/>
    <property type="match status" value="1"/>
</dbReference>
<dbReference type="InterPro" id="IPR001412">
    <property type="entry name" value="aa-tRNA-synth_I_CS"/>
</dbReference>
<dbReference type="InterPro" id="IPR050132">
    <property type="entry name" value="Gln/Glu-tRNA_Ligase"/>
</dbReference>
<dbReference type="InterPro" id="IPR004526">
    <property type="entry name" value="Glu-tRNA-synth_arc/euk"/>
</dbReference>
<dbReference type="InterPro" id="IPR000924">
    <property type="entry name" value="Glu/Gln-tRNA-synth"/>
</dbReference>
<dbReference type="InterPro" id="IPR020058">
    <property type="entry name" value="Glu/Gln-tRNA-synth_Ib_cat-dom"/>
</dbReference>
<dbReference type="InterPro" id="IPR020059">
    <property type="entry name" value="Glu/Gln-tRNA-synth_Ib_codon-bd"/>
</dbReference>
<dbReference type="InterPro" id="IPR020056">
    <property type="entry name" value="Rbsml_bL25/Gln-tRNA_synth_N"/>
</dbReference>
<dbReference type="InterPro" id="IPR011035">
    <property type="entry name" value="Ribosomal_bL25/Gln-tRNA_synth"/>
</dbReference>
<dbReference type="InterPro" id="IPR014729">
    <property type="entry name" value="Rossmann-like_a/b/a_fold"/>
</dbReference>
<dbReference type="InterPro" id="IPR049437">
    <property type="entry name" value="tRNA-synt_1c_C2"/>
</dbReference>
<dbReference type="NCBIfam" id="TIGR00463">
    <property type="entry name" value="gltX_arch"/>
    <property type="match status" value="1"/>
</dbReference>
<dbReference type="NCBIfam" id="NF003169">
    <property type="entry name" value="PRK04156.1"/>
    <property type="match status" value="1"/>
</dbReference>
<dbReference type="PANTHER" id="PTHR43097:SF5">
    <property type="entry name" value="GLUTAMATE--TRNA LIGASE"/>
    <property type="match status" value="1"/>
</dbReference>
<dbReference type="PANTHER" id="PTHR43097">
    <property type="entry name" value="GLUTAMINE-TRNA LIGASE"/>
    <property type="match status" value="1"/>
</dbReference>
<dbReference type="Pfam" id="PF00749">
    <property type="entry name" value="tRNA-synt_1c"/>
    <property type="match status" value="1"/>
</dbReference>
<dbReference type="Pfam" id="PF03950">
    <property type="entry name" value="tRNA-synt_1c_C"/>
    <property type="match status" value="1"/>
</dbReference>
<dbReference type="Pfam" id="PF20974">
    <property type="entry name" value="tRNA-synt_1c_C2"/>
    <property type="match status" value="1"/>
</dbReference>
<dbReference type="PRINTS" id="PR00987">
    <property type="entry name" value="TRNASYNTHGLU"/>
</dbReference>
<dbReference type="SUPFAM" id="SSF52374">
    <property type="entry name" value="Nucleotidylyl transferase"/>
    <property type="match status" value="1"/>
</dbReference>
<dbReference type="SUPFAM" id="SSF50715">
    <property type="entry name" value="Ribosomal protein L25-like"/>
    <property type="match status" value="1"/>
</dbReference>
<dbReference type="PROSITE" id="PS00178">
    <property type="entry name" value="AA_TRNA_LIGASE_I"/>
    <property type="match status" value="1"/>
</dbReference>
<sequence length="569" mass="65142">MEDVKELIVRLAAENALKYGKADTKAVIGKILYMRPDLKQNVRELIPLVEEAVRAVNEMPKEALEGIVGEVKKEKKEEVRKWPDLPKAERGKVVTRVAPEPNGYPTLGHAKGLLVPFIYARLYDGKFLLRFEDTNPRVERLEYYEAIRNEFSRLLEACEEELGLSPGRWDEEIIESYHLEEMYSLAKKLIEAGKAYVCTCPAAEVRKRRKLGISCDHRDQPIEKNLELWEKMLNGGFREGEAHLRLKTDMSHPNVTMRDPGIFRVIEAEHPIHGDKYRVYPVYDFSVSVMDSLTGVTHAFRSKEFEPHVDVQRHIVRALGLREYEMIQFGRITVEGIPLSKRYIRPLVESGILEGWDDPRIPTLRGLFRRGINPRAIVRFFYELGPSKVDATVNMEAIASINRKILDPIAERYMFVPNPIKAKIEGLTPPVIAQVEVHPDSKRKREIRLDESEVFIASSDLEGLKPGDELRLRGLVNVTIRSVNPDEVSLRVSEEQRVKGVKIIQWAPVRNGVPARLFVPESPYSFRMLGGYGEPALRGIKEGEIVQFVRVGFARLDRRDPLTFILSHD</sequence>
<accession>B1L5U2</accession>
<proteinExistence type="inferred from homology"/>
<protein>
    <recommendedName>
        <fullName evidence="1">Glutamate--tRNA ligase</fullName>
        <ecNumber evidence="1">6.1.1.17</ecNumber>
    </recommendedName>
    <alternativeName>
        <fullName evidence="1">Glutamyl-tRNA synthetase</fullName>
        <shortName evidence="1">GluRS</shortName>
    </alternativeName>
</protein>
<name>SYE_KORCO</name>
<reference key="1">
    <citation type="journal article" date="2008" name="Proc. Natl. Acad. Sci. U.S.A.">
        <title>A korarchaeal genome reveals new insights into the evolution of the Archaea.</title>
        <authorList>
            <person name="Elkins J.G."/>
            <person name="Podar M."/>
            <person name="Graham D.E."/>
            <person name="Makarova K.S."/>
            <person name="Wolf Y."/>
            <person name="Randau L."/>
            <person name="Hedlund B.P."/>
            <person name="Brochier-Armanet C."/>
            <person name="Kunin V."/>
            <person name="Anderson I."/>
            <person name="Lapidus A."/>
            <person name="Goltsman E."/>
            <person name="Barry K."/>
            <person name="Koonin E.V."/>
            <person name="Hugenholtz P."/>
            <person name="Kyrpides N."/>
            <person name="Wanner G."/>
            <person name="Richardson P."/>
            <person name="Keller M."/>
            <person name="Stetter K.O."/>
        </authorList>
    </citation>
    <scope>NUCLEOTIDE SEQUENCE [LARGE SCALE GENOMIC DNA]</scope>
    <source>
        <strain>OPF8</strain>
    </source>
</reference>
<gene>
    <name evidence="1" type="primary">gltX</name>
    <name type="ordered locus">Kcr_1075</name>
</gene>
<comment type="function">
    <text evidence="1">Catalyzes the attachment of glutamate to tRNA(Glu) in a two-step reaction: glutamate is first activated by ATP to form Glu-AMP and then transferred to the acceptor end of tRNA(Glu).</text>
</comment>
<comment type="catalytic activity">
    <reaction evidence="1">
        <text>tRNA(Glu) + L-glutamate + ATP = L-glutamyl-tRNA(Glu) + AMP + diphosphate</text>
        <dbReference type="Rhea" id="RHEA:23540"/>
        <dbReference type="Rhea" id="RHEA-COMP:9663"/>
        <dbReference type="Rhea" id="RHEA-COMP:9680"/>
        <dbReference type="ChEBI" id="CHEBI:29985"/>
        <dbReference type="ChEBI" id="CHEBI:30616"/>
        <dbReference type="ChEBI" id="CHEBI:33019"/>
        <dbReference type="ChEBI" id="CHEBI:78442"/>
        <dbReference type="ChEBI" id="CHEBI:78520"/>
        <dbReference type="ChEBI" id="CHEBI:456215"/>
        <dbReference type="EC" id="6.1.1.17"/>
    </reaction>
</comment>
<comment type="subcellular location">
    <subcellularLocation>
        <location evidence="1">Cytoplasm</location>
    </subcellularLocation>
</comment>
<comment type="similarity">
    <text evidence="1">Belongs to the class-I aminoacyl-tRNA synthetase family. Glutamate--tRNA ligase type 2 subfamily.</text>
</comment>
<keyword id="KW-0030">Aminoacyl-tRNA synthetase</keyword>
<keyword id="KW-0067">ATP-binding</keyword>
<keyword id="KW-0963">Cytoplasm</keyword>
<keyword id="KW-0436">Ligase</keyword>
<keyword id="KW-0547">Nucleotide-binding</keyword>
<keyword id="KW-0648">Protein biosynthesis</keyword>
<keyword id="KW-1185">Reference proteome</keyword>
<organism>
    <name type="scientific">Korarchaeum cryptofilum (strain OPF8)</name>
    <dbReference type="NCBI Taxonomy" id="374847"/>
    <lineage>
        <taxon>Archaea</taxon>
        <taxon>Thermoproteota</taxon>
        <taxon>Candidatus Korarchaeia</taxon>
        <taxon>Candidatus Korarchaeales</taxon>
        <taxon>Candidatus Korarchaeaceae</taxon>
        <taxon>Candidatus Korarchaeum</taxon>
    </lineage>
</organism>